<dbReference type="EC" id="7.1.2.2" evidence="1"/>
<dbReference type="EMBL" id="X66939">
    <property type="protein sequence ID" value="CAA47370.1"/>
    <property type="molecule type" value="Genomic_DNA"/>
</dbReference>
<dbReference type="PIR" id="S22509">
    <property type="entry name" value="S22509"/>
</dbReference>
<dbReference type="SMR" id="P30158"/>
<dbReference type="GO" id="GO:0009535">
    <property type="term" value="C:chloroplast thylakoid membrane"/>
    <property type="evidence" value="ECO:0007669"/>
    <property type="project" value="UniProtKB-SubCell"/>
</dbReference>
<dbReference type="GO" id="GO:0005739">
    <property type="term" value="C:mitochondrion"/>
    <property type="evidence" value="ECO:0007669"/>
    <property type="project" value="GOC"/>
</dbReference>
<dbReference type="GO" id="GO:0045259">
    <property type="term" value="C:proton-transporting ATP synthase complex"/>
    <property type="evidence" value="ECO:0007669"/>
    <property type="project" value="UniProtKB-KW"/>
</dbReference>
<dbReference type="GO" id="GO:0005524">
    <property type="term" value="F:ATP binding"/>
    <property type="evidence" value="ECO:0007669"/>
    <property type="project" value="UniProtKB-UniRule"/>
</dbReference>
<dbReference type="GO" id="GO:0016887">
    <property type="term" value="F:ATP hydrolysis activity"/>
    <property type="evidence" value="ECO:0007669"/>
    <property type="project" value="InterPro"/>
</dbReference>
<dbReference type="GO" id="GO:0046933">
    <property type="term" value="F:proton-transporting ATP synthase activity, rotational mechanism"/>
    <property type="evidence" value="ECO:0007669"/>
    <property type="project" value="UniProtKB-UniRule"/>
</dbReference>
<dbReference type="GO" id="GO:0042776">
    <property type="term" value="P:proton motive force-driven mitochondrial ATP synthesis"/>
    <property type="evidence" value="ECO:0007669"/>
    <property type="project" value="TreeGrafter"/>
</dbReference>
<dbReference type="CDD" id="cd18110">
    <property type="entry name" value="ATP-synt_F1_beta_C"/>
    <property type="match status" value="1"/>
</dbReference>
<dbReference type="CDD" id="cd18115">
    <property type="entry name" value="ATP-synt_F1_beta_N"/>
    <property type="match status" value="1"/>
</dbReference>
<dbReference type="CDD" id="cd01133">
    <property type="entry name" value="F1-ATPase_beta_CD"/>
    <property type="match status" value="1"/>
</dbReference>
<dbReference type="FunFam" id="1.10.1140.10:FF:000001">
    <property type="entry name" value="ATP synthase subunit beta"/>
    <property type="match status" value="1"/>
</dbReference>
<dbReference type="FunFam" id="3.40.50.300:FF:000004">
    <property type="entry name" value="ATP synthase subunit beta"/>
    <property type="match status" value="1"/>
</dbReference>
<dbReference type="Gene3D" id="2.40.10.170">
    <property type="match status" value="1"/>
</dbReference>
<dbReference type="Gene3D" id="1.10.1140.10">
    <property type="entry name" value="Bovine Mitochondrial F1-atpase, Atp Synthase Beta Chain, Chain D, domain 3"/>
    <property type="match status" value="1"/>
</dbReference>
<dbReference type="Gene3D" id="3.40.50.300">
    <property type="entry name" value="P-loop containing nucleotide triphosphate hydrolases"/>
    <property type="match status" value="1"/>
</dbReference>
<dbReference type="HAMAP" id="MF_01347">
    <property type="entry name" value="ATP_synth_beta_bact"/>
    <property type="match status" value="1"/>
</dbReference>
<dbReference type="InterPro" id="IPR003593">
    <property type="entry name" value="AAA+_ATPase"/>
</dbReference>
<dbReference type="InterPro" id="IPR055190">
    <property type="entry name" value="ATP-synt_VA_C"/>
</dbReference>
<dbReference type="InterPro" id="IPR005722">
    <property type="entry name" value="ATP_synth_F1_bsu"/>
</dbReference>
<dbReference type="InterPro" id="IPR020003">
    <property type="entry name" value="ATPase_a/bsu_AS"/>
</dbReference>
<dbReference type="InterPro" id="IPR050053">
    <property type="entry name" value="ATPase_alpha/beta_chains"/>
</dbReference>
<dbReference type="InterPro" id="IPR004100">
    <property type="entry name" value="ATPase_F1/V1/A1_a/bsu_N"/>
</dbReference>
<dbReference type="InterPro" id="IPR036121">
    <property type="entry name" value="ATPase_F1/V1/A1_a/bsu_N_sf"/>
</dbReference>
<dbReference type="InterPro" id="IPR000194">
    <property type="entry name" value="ATPase_F1/V1/A1_a/bsu_nucl-bd"/>
</dbReference>
<dbReference type="InterPro" id="IPR024034">
    <property type="entry name" value="ATPase_F1/V1_b/a_C"/>
</dbReference>
<dbReference type="InterPro" id="IPR027417">
    <property type="entry name" value="P-loop_NTPase"/>
</dbReference>
<dbReference type="NCBIfam" id="TIGR01039">
    <property type="entry name" value="atpD"/>
    <property type="match status" value="1"/>
</dbReference>
<dbReference type="PANTHER" id="PTHR15184">
    <property type="entry name" value="ATP SYNTHASE"/>
    <property type="match status" value="1"/>
</dbReference>
<dbReference type="PANTHER" id="PTHR15184:SF71">
    <property type="entry name" value="ATP SYNTHASE SUBUNIT BETA, MITOCHONDRIAL"/>
    <property type="match status" value="1"/>
</dbReference>
<dbReference type="Pfam" id="PF00006">
    <property type="entry name" value="ATP-synt_ab"/>
    <property type="match status" value="1"/>
</dbReference>
<dbReference type="Pfam" id="PF02874">
    <property type="entry name" value="ATP-synt_ab_N"/>
    <property type="match status" value="1"/>
</dbReference>
<dbReference type="Pfam" id="PF22919">
    <property type="entry name" value="ATP-synt_VA_C"/>
    <property type="match status" value="1"/>
</dbReference>
<dbReference type="SMART" id="SM00382">
    <property type="entry name" value="AAA"/>
    <property type="match status" value="1"/>
</dbReference>
<dbReference type="SUPFAM" id="SSF47917">
    <property type="entry name" value="C-terminal domain of alpha and beta subunits of F1 ATP synthase"/>
    <property type="match status" value="1"/>
</dbReference>
<dbReference type="SUPFAM" id="SSF50615">
    <property type="entry name" value="N-terminal domain of alpha and beta subunits of F1 ATP synthase"/>
    <property type="match status" value="1"/>
</dbReference>
<dbReference type="SUPFAM" id="SSF52540">
    <property type="entry name" value="P-loop containing nucleoside triphosphate hydrolases"/>
    <property type="match status" value="1"/>
</dbReference>
<dbReference type="PROSITE" id="PS00152">
    <property type="entry name" value="ATPASE_ALPHA_BETA"/>
    <property type="match status" value="1"/>
</dbReference>
<keyword id="KW-0066">ATP synthesis</keyword>
<keyword id="KW-0067">ATP-binding</keyword>
<keyword id="KW-0139">CF(1)</keyword>
<keyword id="KW-0150">Chloroplast</keyword>
<keyword id="KW-0375">Hydrogen ion transport</keyword>
<keyword id="KW-0406">Ion transport</keyword>
<keyword id="KW-0472">Membrane</keyword>
<keyword id="KW-0547">Nucleotide-binding</keyword>
<keyword id="KW-0934">Plastid</keyword>
<keyword id="KW-0793">Thylakoid</keyword>
<keyword id="KW-1278">Translocase</keyword>
<keyword id="KW-0813">Transport</keyword>
<reference key="1">
    <citation type="journal article" date="1992" name="Plant Mol. Biol.">
        <title>Nucleotide sequence and phylogenetic implication of the ATPase subunits beta and epsilon encoded in the chloroplast genome of the brown alga Dictyota dichotoma.</title>
        <authorList>
            <person name="Leitsch C.E.W."/>
            <person name="Kowallik K.V."/>
        </authorList>
    </citation>
    <scope>NUCLEOTIDE SEQUENCE [GENOMIC DNA]</scope>
</reference>
<sequence length="481" mass="52204">MSENLNREPELNIGYITQVIGPVIDAVFSAGQLPKIYNALEVKSKDGTTIICEVQQLFNDNRVRAIAMSATDGLQRGVEVIDTQAPILVPVGKATLGRIFNVLGQTVDNIEIGTGEDRLPIHRPAPSFTDLETKPAIFETGIKVVDLLAPYRRGGKIGLFGGAGVGKTVLIMELINNIAKAHGGVSVFGGVGERTREGNDLYMEMKESGVINESNLSESKVALVYGQMNEPPGARMRVGLTALTMAEYFRDINRQDVLLFIDNIFRFVQAGSEVSALLGRMPSAVGYQPTLGTEMGALQERITSTTQGSITSIQAVYVPADDLTDPAPATTFAHLDATTVLSRGLAAKGIYPAVDPLDSTSTMLQPVIVGSEHYDTAQLVKKTLQRYKELQDIIAILGIDELSEEDRLVVDRARKIERFLSQPFFVAEVFTGSPGKYVDLENTIKGFNMILNGELDVYQSIAFYLVGDINEAIAKAKTITN</sequence>
<accession>P30158</accession>
<geneLocation type="chloroplast"/>
<gene>
    <name evidence="1" type="primary">atpB</name>
</gene>
<proteinExistence type="inferred from homology"/>
<comment type="function">
    <text evidence="1">Produces ATP from ADP in the presence of a proton gradient across the membrane. The catalytic sites are hosted primarily by the beta subunits.</text>
</comment>
<comment type="catalytic activity">
    <reaction evidence="1">
        <text>ATP + H2O + 4 H(+)(in) = ADP + phosphate + 5 H(+)(out)</text>
        <dbReference type="Rhea" id="RHEA:57720"/>
        <dbReference type="ChEBI" id="CHEBI:15377"/>
        <dbReference type="ChEBI" id="CHEBI:15378"/>
        <dbReference type="ChEBI" id="CHEBI:30616"/>
        <dbReference type="ChEBI" id="CHEBI:43474"/>
        <dbReference type="ChEBI" id="CHEBI:456216"/>
        <dbReference type="EC" id="7.1.2.2"/>
    </reaction>
</comment>
<comment type="subunit">
    <text evidence="1">F-type ATPases have 2 components, CF(1) - the catalytic core - and CF(0) - the membrane proton channel. CF(1) has five subunits: alpha(3), beta(3), gamma(1), delta(1), epsilon(1). CF(0) has four main subunits: a(1), b(1), b'(1) and c(9-12).</text>
</comment>
<comment type="subcellular location">
    <subcellularLocation>
        <location evidence="1">Plastid</location>
        <location evidence="1">Chloroplast thylakoid membrane</location>
        <topology evidence="1">Peripheral membrane protein</topology>
    </subcellularLocation>
</comment>
<comment type="similarity">
    <text evidence="1">Belongs to the ATPase alpha/beta chains family.</text>
</comment>
<name>ATPB_DICDH</name>
<protein>
    <recommendedName>
        <fullName evidence="1">ATP synthase subunit beta, chloroplastic</fullName>
        <ecNumber evidence="1">7.1.2.2</ecNumber>
    </recommendedName>
    <alternativeName>
        <fullName evidence="1">ATP synthase F1 sector subunit beta</fullName>
    </alternativeName>
    <alternativeName>
        <fullName evidence="1">F-ATPase subunit beta</fullName>
    </alternativeName>
</protein>
<organism>
    <name type="scientific">Dictyota dichotoma</name>
    <dbReference type="NCBI Taxonomy" id="2876"/>
    <lineage>
        <taxon>Eukaryota</taxon>
        <taxon>Sar</taxon>
        <taxon>Stramenopiles</taxon>
        <taxon>Ochrophyta</taxon>
        <taxon>PX clade</taxon>
        <taxon>Phaeophyceae</taxon>
        <taxon>Dictyotales</taxon>
        <taxon>Dictyotaceae</taxon>
        <taxon>Dictyota</taxon>
    </lineage>
</organism>
<evidence type="ECO:0000255" key="1">
    <source>
        <dbReference type="HAMAP-Rule" id="MF_01347"/>
    </source>
</evidence>
<feature type="chain" id="PRO_0000144511" description="ATP synthase subunit beta, chloroplastic">
    <location>
        <begin position="1"/>
        <end position="481"/>
    </location>
</feature>
<feature type="binding site" evidence="1">
    <location>
        <begin position="161"/>
        <end position="168"/>
    </location>
    <ligand>
        <name>ATP</name>
        <dbReference type="ChEBI" id="CHEBI:30616"/>
    </ligand>
</feature>